<dbReference type="EC" id="3.1.11.6" evidence="1"/>
<dbReference type="EMBL" id="CP001390">
    <property type="protein sequence ID" value="ACM20976.1"/>
    <property type="molecule type" value="Genomic_DNA"/>
</dbReference>
<dbReference type="SMR" id="B9M0X3"/>
<dbReference type="STRING" id="316067.Geob_2626"/>
<dbReference type="KEGG" id="geo:Geob_2626"/>
<dbReference type="eggNOG" id="COG1570">
    <property type="taxonomic scope" value="Bacteria"/>
</dbReference>
<dbReference type="HOGENOM" id="CLU_023625_3_1_7"/>
<dbReference type="OrthoDB" id="9802795at2"/>
<dbReference type="Proteomes" id="UP000007721">
    <property type="component" value="Chromosome"/>
</dbReference>
<dbReference type="GO" id="GO:0005737">
    <property type="term" value="C:cytoplasm"/>
    <property type="evidence" value="ECO:0007669"/>
    <property type="project" value="UniProtKB-SubCell"/>
</dbReference>
<dbReference type="GO" id="GO:0009318">
    <property type="term" value="C:exodeoxyribonuclease VII complex"/>
    <property type="evidence" value="ECO:0007669"/>
    <property type="project" value="InterPro"/>
</dbReference>
<dbReference type="GO" id="GO:0008855">
    <property type="term" value="F:exodeoxyribonuclease VII activity"/>
    <property type="evidence" value="ECO:0007669"/>
    <property type="project" value="UniProtKB-UniRule"/>
</dbReference>
<dbReference type="GO" id="GO:0003676">
    <property type="term" value="F:nucleic acid binding"/>
    <property type="evidence" value="ECO:0007669"/>
    <property type="project" value="InterPro"/>
</dbReference>
<dbReference type="GO" id="GO:0006308">
    <property type="term" value="P:DNA catabolic process"/>
    <property type="evidence" value="ECO:0007669"/>
    <property type="project" value="UniProtKB-UniRule"/>
</dbReference>
<dbReference type="CDD" id="cd04489">
    <property type="entry name" value="ExoVII_LU_OBF"/>
    <property type="match status" value="1"/>
</dbReference>
<dbReference type="HAMAP" id="MF_00378">
    <property type="entry name" value="Exonuc_7_L"/>
    <property type="match status" value="1"/>
</dbReference>
<dbReference type="InterPro" id="IPR003753">
    <property type="entry name" value="Exonuc_VII_L"/>
</dbReference>
<dbReference type="InterPro" id="IPR020579">
    <property type="entry name" value="Exonuc_VII_lsu_C"/>
</dbReference>
<dbReference type="InterPro" id="IPR025824">
    <property type="entry name" value="OB-fold_nuc-bd_dom"/>
</dbReference>
<dbReference type="NCBIfam" id="TIGR00237">
    <property type="entry name" value="xseA"/>
    <property type="match status" value="1"/>
</dbReference>
<dbReference type="PANTHER" id="PTHR30008">
    <property type="entry name" value="EXODEOXYRIBONUCLEASE 7 LARGE SUBUNIT"/>
    <property type="match status" value="1"/>
</dbReference>
<dbReference type="PANTHER" id="PTHR30008:SF0">
    <property type="entry name" value="EXODEOXYRIBONUCLEASE 7 LARGE SUBUNIT"/>
    <property type="match status" value="1"/>
</dbReference>
<dbReference type="Pfam" id="PF02601">
    <property type="entry name" value="Exonuc_VII_L"/>
    <property type="match status" value="1"/>
</dbReference>
<dbReference type="Pfam" id="PF13742">
    <property type="entry name" value="tRNA_anti_2"/>
    <property type="match status" value="1"/>
</dbReference>
<keyword id="KW-0963">Cytoplasm</keyword>
<keyword id="KW-0269">Exonuclease</keyword>
<keyword id="KW-0378">Hydrolase</keyword>
<keyword id="KW-0540">Nuclease</keyword>
<keyword id="KW-1185">Reference proteome</keyword>
<evidence type="ECO:0000255" key="1">
    <source>
        <dbReference type="HAMAP-Rule" id="MF_00378"/>
    </source>
</evidence>
<gene>
    <name evidence="1" type="primary">xseA</name>
    <name type="ordered locus">Geob_2626</name>
</gene>
<protein>
    <recommendedName>
        <fullName evidence="1">Exodeoxyribonuclease 7 large subunit</fullName>
        <ecNumber evidence="1">3.1.11.6</ecNumber>
    </recommendedName>
    <alternativeName>
        <fullName evidence="1">Exodeoxyribonuclease VII large subunit</fullName>
        <shortName evidence="1">Exonuclease VII large subunit</shortName>
    </alternativeName>
</protein>
<comment type="function">
    <text evidence="1">Bidirectionally degrades single-stranded DNA into large acid-insoluble oligonucleotides, which are then degraded further into small acid-soluble oligonucleotides.</text>
</comment>
<comment type="catalytic activity">
    <reaction evidence="1">
        <text>Exonucleolytic cleavage in either 5'- to 3'- or 3'- to 5'-direction to yield nucleoside 5'-phosphates.</text>
        <dbReference type="EC" id="3.1.11.6"/>
    </reaction>
</comment>
<comment type="subunit">
    <text evidence="1">Heterooligomer composed of large and small subunits.</text>
</comment>
<comment type="subcellular location">
    <subcellularLocation>
        <location evidence="1">Cytoplasm</location>
    </subcellularLocation>
</comment>
<comment type="similarity">
    <text evidence="1">Belongs to the XseA family.</text>
</comment>
<name>EX7L_GEODF</name>
<organism>
    <name type="scientific">Geotalea daltonii (strain DSM 22248 / JCM 15807 / FRC-32)</name>
    <name type="common">Geobacter daltonii</name>
    <dbReference type="NCBI Taxonomy" id="316067"/>
    <lineage>
        <taxon>Bacteria</taxon>
        <taxon>Pseudomonadati</taxon>
        <taxon>Thermodesulfobacteriota</taxon>
        <taxon>Desulfuromonadia</taxon>
        <taxon>Geobacterales</taxon>
        <taxon>Geobacteraceae</taxon>
        <taxon>Geotalea</taxon>
    </lineage>
</organism>
<sequence length="445" mass="49256">MLFAEKNILSVSQLTGLVRNVLEDNFDHVWVEGEVSNLATPGSGHLYFTLKDASAQLRCVMFRASVRALKFKPSDGMGLIARGRLSVFDARGEYQLIVEYLEPKGIGALQLAFIQLKERLAKEGLFSDSHKKDIPRLPQRIGIVTSATGAAIHDILNVLNRRFANVQVLLRPVKVQGEGAAEEIAAAVNDLNRYGSIDVMIVGRGGGSLEDLWAFNEEIVARAIYRSSIPVISAVGHEIDFTISDFVADLRAPTPSAAAEMVIKSKAEISAELEALFHRLGMAVRRLLNEHWGELNGLVRAVKDPSMLLGHLAQRLDDLEGRSWRCIRQLLIRSADTNHFLHDRLRLQNPVLRLERCREQLLLVQSRIEKTMMHTVERAGQSLAFNAGKLQALSPLATMARGYSIVKKLPGGAVVTDRDQLAPGDSLDILLRKGRAICRVECTHD</sequence>
<proteinExistence type="inferred from homology"/>
<feature type="chain" id="PRO_1000205675" description="Exodeoxyribonuclease 7 large subunit">
    <location>
        <begin position="1"/>
        <end position="445"/>
    </location>
</feature>
<reference key="1">
    <citation type="submission" date="2009-01" db="EMBL/GenBank/DDBJ databases">
        <title>Complete sequence of Geobacter sp. FRC-32.</title>
        <authorList>
            <consortium name="US DOE Joint Genome Institute"/>
            <person name="Lucas S."/>
            <person name="Copeland A."/>
            <person name="Lapidus A."/>
            <person name="Glavina del Rio T."/>
            <person name="Dalin E."/>
            <person name="Tice H."/>
            <person name="Bruce D."/>
            <person name="Goodwin L."/>
            <person name="Pitluck S."/>
            <person name="Saunders E."/>
            <person name="Brettin T."/>
            <person name="Detter J.C."/>
            <person name="Han C."/>
            <person name="Larimer F."/>
            <person name="Land M."/>
            <person name="Hauser L."/>
            <person name="Kyrpides N."/>
            <person name="Ovchinnikova G."/>
            <person name="Kostka J."/>
            <person name="Richardson P."/>
        </authorList>
    </citation>
    <scope>NUCLEOTIDE SEQUENCE [LARGE SCALE GENOMIC DNA]</scope>
    <source>
        <strain>DSM 22248 / JCM 15807 / FRC-32</strain>
    </source>
</reference>
<accession>B9M0X3</accession>